<reference key="1">
    <citation type="journal article" date="2005" name="Nucleic Acids Res.">
        <title>Genome dynamics and diversity of Shigella species, the etiologic agents of bacillary dysentery.</title>
        <authorList>
            <person name="Yang F."/>
            <person name="Yang J."/>
            <person name="Zhang X."/>
            <person name="Chen L."/>
            <person name="Jiang Y."/>
            <person name="Yan Y."/>
            <person name="Tang X."/>
            <person name="Wang J."/>
            <person name="Xiong Z."/>
            <person name="Dong J."/>
            <person name="Xue Y."/>
            <person name="Zhu Y."/>
            <person name="Xu X."/>
            <person name="Sun L."/>
            <person name="Chen S."/>
            <person name="Nie H."/>
            <person name="Peng J."/>
            <person name="Xu J."/>
            <person name="Wang Y."/>
            <person name="Yuan Z."/>
            <person name="Wen Y."/>
            <person name="Yao Z."/>
            <person name="Shen Y."/>
            <person name="Qiang B."/>
            <person name="Hou Y."/>
            <person name="Yu J."/>
            <person name="Jin Q."/>
        </authorList>
    </citation>
    <scope>NUCLEOTIDE SEQUENCE [LARGE SCALE GENOMIC DNA]</scope>
    <source>
        <strain>Sd197</strain>
    </source>
</reference>
<keyword id="KW-0998">Cell outer membrane</keyword>
<keyword id="KW-0449">Lipoprotein</keyword>
<keyword id="KW-0472">Membrane</keyword>
<keyword id="KW-0564">Palmitate</keyword>
<keyword id="KW-1185">Reference proteome</keyword>
<keyword id="KW-0732">Signal</keyword>
<name>BAMB_SHIDS</name>
<protein>
    <recommendedName>
        <fullName evidence="1">Outer membrane protein assembly factor BamB</fullName>
    </recommendedName>
</protein>
<feature type="signal peptide" evidence="1">
    <location>
        <begin position="1"/>
        <end position="19"/>
    </location>
</feature>
<feature type="chain" id="PRO_0000417689" description="Outer membrane protein assembly factor BamB">
    <location>
        <begin position="20"/>
        <end position="392"/>
    </location>
</feature>
<feature type="lipid moiety-binding region" description="N-palmitoyl cysteine" evidence="1">
    <location>
        <position position="20"/>
    </location>
</feature>
<feature type="lipid moiety-binding region" description="S-diacylglycerol cysteine" evidence="1">
    <location>
        <position position="20"/>
    </location>
</feature>
<evidence type="ECO:0000255" key="1">
    <source>
        <dbReference type="HAMAP-Rule" id="MF_00923"/>
    </source>
</evidence>
<accession>Q32D50</accession>
<organism>
    <name type="scientific">Shigella dysenteriae serotype 1 (strain Sd197)</name>
    <dbReference type="NCBI Taxonomy" id="300267"/>
    <lineage>
        <taxon>Bacteria</taxon>
        <taxon>Pseudomonadati</taxon>
        <taxon>Pseudomonadota</taxon>
        <taxon>Gammaproteobacteria</taxon>
        <taxon>Enterobacterales</taxon>
        <taxon>Enterobacteriaceae</taxon>
        <taxon>Shigella</taxon>
    </lineage>
</organism>
<comment type="function">
    <text evidence="1">Part of the outer membrane protein assembly complex, which is involved in assembly and insertion of beta-barrel proteins into the outer membrane.</text>
</comment>
<comment type="subunit">
    <text evidence="1">Part of the Bam complex, which is composed of the outer membrane protein BamA, and four lipoproteins BamB, BamC, BamD and BamE.</text>
</comment>
<comment type="subcellular location">
    <subcellularLocation>
        <location evidence="1">Cell outer membrane</location>
        <topology evidence="1">Lipid-anchor</topology>
    </subcellularLocation>
</comment>
<comment type="similarity">
    <text evidence="1">Belongs to the BamB family.</text>
</comment>
<proteinExistence type="inferred from homology"/>
<sequence>MQLRKLLLPGLLSVTLLSGCSLFNSEEDVVKMSPLPTVENQFTPTTAWSTSVGSGIGNFYSNLHPALADNVVYAADRAGLVKALNADDGKEIWSVSLAEKDGWFSKEPALLSGGVTVSGGHVYIGSEKAQVYALNTSDGTVAWQTKVAGEALSRPVVSDGLVLIHTSNGQLQALNEADGAVKWTVNLDMPSLSLRGESAPATAFGAAVVGGDNGRVSAVLMEQGQMIWQQRISQATGSTEIDRLSDVDTTPVVVNGVVFALAYNGNLTALDLRSGQIMWKRELGSVNDFIVDGNRIYLVDQNDRVMALTIDGGVTLWTQSDLLHRLLTSPVLYNGNLVVGDSEGYLHWINVEDGRFVAQQKVDSSGFQTEPVAADGKLLIQAKDGTVYSITR</sequence>
<dbReference type="EMBL" id="CP000034">
    <property type="protein sequence ID" value="ABB62755.1"/>
    <property type="molecule type" value="Genomic_DNA"/>
</dbReference>
<dbReference type="RefSeq" id="WP_001177048.1">
    <property type="nucleotide sequence ID" value="NC_007606.1"/>
</dbReference>
<dbReference type="RefSeq" id="YP_404246.1">
    <property type="nucleotide sequence ID" value="NC_007606.1"/>
</dbReference>
<dbReference type="SMR" id="Q32D50"/>
<dbReference type="STRING" id="300267.SDY_2708"/>
<dbReference type="EnsemblBacteria" id="ABB62755">
    <property type="protein sequence ID" value="ABB62755"/>
    <property type="gene ID" value="SDY_2708"/>
</dbReference>
<dbReference type="GeneID" id="93774624"/>
<dbReference type="KEGG" id="sdy:SDY_2708"/>
<dbReference type="PATRIC" id="fig|300267.13.peg.3266"/>
<dbReference type="HOGENOM" id="CLU_027480_0_1_6"/>
<dbReference type="Proteomes" id="UP000002716">
    <property type="component" value="Chromosome"/>
</dbReference>
<dbReference type="GO" id="GO:0009279">
    <property type="term" value="C:cell outer membrane"/>
    <property type="evidence" value="ECO:0007669"/>
    <property type="project" value="UniProtKB-SubCell"/>
</dbReference>
<dbReference type="GO" id="GO:0043165">
    <property type="term" value="P:Gram-negative-bacterium-type cell outer membrane assembly"/>
    <property type="evidence" value="ECO:0007669"/>
    <property type="project" value="UniProtKB-UniRule"/>
</dbReference>
<dbReference type="GO" id="GO:0051205">
    <property type="term" value="P:protein insertion into membrane"/>
    <property type="evidence" value="ECO:0007669"/>
    <property type="project" value="UniProtKB-UniRule"/>
</dbReference>
<dbReference type="CDD" id="cd00216">
    <property type="entry name" value="PQQ_DH_like"/>
    <property type="match status" value="1"/>
</dbReference>
<dbReference type="FunFam" id="2.130.10.10:FF:000125">
    <property type="entry name" value="Outer membrane protein assembly factor BamB"/>
    <property type="match status" value="1"/>
</dbReference>
<dbReference type="Gene3D" id="2.130.10.10">
    <property type="entry name" value="YVTN repeat-like/Quinoprotein amine dehydrogenase"/>
    <property type="match status" value="1"/>
</dbReference>
<dbReference type="HAMAP" id="MF_00923">
    <property type="entry name" value="OM_assembly_BamB"/>
    <property type="match status" value="1"/>
</dbReference>
<dbReference type="InterPro" id="IPR017687">
    <property type="entry name" value="BamB"/>
</dbReference>
<dbReference type="InterPro" id="IPR018391">
    <property type="entry name" value="PQQ_b-propeller_rpt"/>
</dbReference>
<dbReference type="InterPro" id="IPR002372">
    <property type="entry name" value="PQQ_rpt_dom"/>
</dbReference>
<dbReference type="InterPro" id="IPR011047">
    <property type="entry name" value="Quinoprotein_ADH-like_sf"/>
</dbReference>
<dbReference type="InterPro" id="IPR015943">
    <property type="entry name" value="WD40/YVTN_repeat-like_dom_sf"/>
</dbReference>
<dbReference type="NCBIfam" id="TIGR03300">
    <property type="entry name" value="assembly_YfgL"/>
    <property type="match status" value="1"/>
</dbReference>
<dbReference type="NCBIfam" id="NF008351">
    <property type="entry name" value="PRK11138.1"/>
    <property type="match status" value="1"/>
</dbReference>
<dbReference type="PANTHER" id="PTHR34512">
    <property type="entry name" value="CELL SURFACE PROTEIN"/>
    <property type="match status" value="1"/>
</dbReference>
<dbReference type="PANTHER" id="PTHR34512:SF30">
    <property type="entry name" value="OUTER MEMBRANE PROTEIN ASSEMBLY FACTOR BAMB"/>
    <property type="match status" value="1"/>
</dbReference>
<dbReference type="Pfam" id="PF13360">
    <property type="entry name" value="PQQ_2"/>
    <property type="match status" value="1"/>
</dbReference>
<dbReference type="SMART" id="SM00564">
    <property type="entry name" value="PQQ"/>
    <property type="match status" value="7"/>
</dbReference>
<dbReference type="SUPFAM" id="SSF50998">
    <property type="entry name" value="Quinoprotein alcohol dehydrogenase-like"/>
    <property type="match status" value="1"/>
</dbReference>
<dbReference type="PROSITE" id="PS51257">
    <property type="entry name" value="PROKAR_LIPOPROTEIN"/>
    <property type="match status" value="1"/>
</dbReference>
<gene>
    <name evidence="1" type="primary">bamB</name>
    <name type="ordered locus">SDY_2708</name>
</gene>